<name>SYC_BURP1</name>
<sequence>MESLRIYNTLARDKQDFVPRQPGEVRMYVCGITVYDYCHIGHARMVVVFDIVQRWLRARGYRVTYVRNITDIDDKIIRRAVENGETIQSLTRRFTDAMNADFDALGVERPDLEPRATEFIPQMLGMIEKLEANGYAYQAKDGDVNYSVRKFANYGRLSGKSLEDLRAGERVAANDAKEDPLDFVLWKRAKPQEPAGASWESKYGAGRPGWHIECSAMGCTLLGAHFDIHGGGQDLQFPHHENEIAQSEGATGQTFVNYWMHNGFVQVDSEKMSKSLGNFFTIREVLEKFDAEVVRFFIVRTHYRSPLNYSDVHLDDARASLTRLYTALKDATPDAQPLDWSEAHAQRFAAAMNDDFNTAVAVAVLFELATEVNRTREPALARQLRLLAGLLGLLGREPREFLQHAAGAARTGALEPHEIEARIAARVAAKQAKNYAEADRIRAELLEAGIALEDKPGGSTEWRRV</sequence>
<dbReference type="EC" id="6.1.1.16" evidence="1"/>
<dbReference type="EMBL" id="CP000124">
    <property type="protein sequence ID" value="ABA48316.1"/>
    <property type="molecule type" value="Genomic_DNA"/>
</dbReference>
<dbReference type="RefSeq" id="WP_004192752.1">
    <property type="nucleotide sequence ID" value="NC_007434.1"/>
</dbReference>
<dbReference type="SMR" id="Q3JQT6"/>
<dbReference type="EnsemblBacteria" id="ABA48316">
    <property type="protein sequence ID" value="ABA48316"/>
    <property type="gene ID" value="BURPS1710b_2681"/>
</dbReference>
<dbReference type="GeneID" id="93060794"/>
<dbReference type="KEGG" id="bpm:BURPS1710b_2681"/>
<dbReference type="HOGENOM" id="CLU_013528_0_2_4"/>
<dbReference type="Proteomes" id="UP000002700">
    <property type="component" value="Chromosome I"/>
</dbReference>
<dbReference type="GO" id="GO:0005829">
    <property type="term" value="C:cytosol"/>
    <property type="evidence" value="ECO:0007669"/>
    <property type="project" value="TreeGrafter"/>
</dbReference>
<dbReference type="GO" id="GO:0005524">
    <property type="term" value="F:ATP binding"/>
    <property type="evidence" value="ECO:0007669"/>
    <property type="project" value="UniProtKB-UniRule"/>
</dbReference>
<dbReference type="GO" id="GO:0004817">
    <property type="term" value="F:cysteine-tRNA ligase activity"/>
    <property type="evidence" value="ECO:0007669"/>
    <property type="project" value="UniProtKB-UniRule"/>
</dbReference>
<dbReference type="GO" id="GO:0008270">
    <property type="term" value="F:zinc ion binding"/>
    <property type="evidence" value="ECO:0007669"/>
    <property type="project" value="UniProtKB-UniRule"/>
</dbReference>
<dbReference type="GO" id="GO:0006423">
    <property type="term" value="P:cysteinyl-tRNA aminoacylation"/>
    <property type="evidence" value="ECO:0007669"/>
    <property type="project" value="UniProtKB-UniRule"/>
</dbReference>
<dbReference type="CDD" id="cd07963">
    <property type="entry name" value="Anticodon_Ia_Cys"/>
    <property type="match status" value="1"/>
</dbReference>
<dbReference type="CDD" id="cd00672">
    <property type="entry name" value="CysRS_core"/>
    <property type="match status" value="1"/>
</dbReference>
<dbReference type="FunFam" id="3.40.50.620:FF:000009">
    <property type="entry name" value="Cysteine--tRNA ligase"/>
    <property type="match status" value="1"/>
</dbReference>
<dbReference type="Gene3D" id="1.20.120.1910">
    <property type="entry name" value="Cysteine-tRNA ligase, C-terminal anti-codon recognition domain"/>
    <property type="match status" value="1"/>
</dbReference>
<dbReference type="Gene3D" id="3.40.50.620">
    <property type="entry name" value="HUPs"/>
    <property type="match status" value="1"/>
</dbReference>
<dbReference type="HAMAP" id="MF_00041">
    <property type="entry name" value="Cys_tRNA_synth"/>
    <property type="match status" value="1"/>
</dbReference>
<dbReference type="InterPro" id="IPR015803">
    <property type="entry name" value="Cys-tRNA-ligase"/>
</dbReference>
<dbReference type="InterPro" id="IPR015273">
    <property type="entry name" value="Cys-tRNA-synt_Ia_DALR"/>
</dbReference>
<dbReference type="InterPro" id="IPR024909">
    <property type="entry name" value="Cys-tRNA/MSH_ligase"/>
</dbReference>
<dbReference type="InterPro" id="IPR056411">
    <property type="entry name" value="CysS_C"/>
</dbReference>
<dbReference type="InterPro" id="IPR014729">
    <property type="entry name" value="Rossmann-like_a/b/a_fold"/>
</dbReference>
<dbReference type="InterPro" id="IPR032678">
    <property type="entry name" value="tRNA-synt_1_cat_dom"/>
</dbReference>
<dbReference type="InterPro" id="IPR009080">
    <property type="entry name" value="tRNAsynth_Ia_anticodon-bd"/>
</dbReference>
<dbReference type="NCBIfam" id="TIGR00435">
    <property type="entry name" value="cysS"/>
    <property type="match status" value="1"/>
</dbReference>
<dbReference type="PANTHER" id="PTHR10890:SF3">
    <property type="entry name" value="CYSTEINE--TRNA LIGASE, CYTOPLASMIC"/>
    <property type="match status" value="1"/>
</dbReference>
<dbReference type="PANTHER" id="PTHR10890">
    <property type="entry name" value="CYSTEINYL-TRNA SYNTHETASE"/>
    <property type="match status" value="1"/>
</dbReference>
<dbReference type="Pfam" id="PF23493">
    <property type="entry name" value="CysS_C"/>
    <property type="match status" value="1"/>
</dbReference>
<dbReference type="Pfam" id="PF09190">
    <property type="entry name" value="DALR_2"/>
    <property type="match status" value="1"/>
</dbReference>
<dbReference type="Pfam" id="PF01406">
    <property type="entry name" value="tRNA-synt_1e"/>
    <property type="match status" value="1"/>
</dbReference>
<dbReference type="PRINTS" id="PR00983">
    <property type="entry name" value="TRNASYNTHCYS"/>
</dbReference>
<dbReference type="SMART" id="SM00840">
    <property type="entry name" value="DALR_2"/>
    <property type="match status" value="1"/>
</dbReference>
<dbReference type="SUPFAM" id="SSF47323">
    <property type="entry name" value="Anticodon-binding domain of a subclass of class I aminoacyl-tRNA synthetases"/>
    <property type="match status" value="1"/>
</dbReference>
<dbReference type="SUPFAM" id="SSF52374">
    <property type="entry name" value="Nucleotidylyl transferase"/>
    <property type="match status" value="1"/>
</dbReference>
<gene>
    <name evidence="1" type="primary">cysS</name>
    <name type="ordered locus">BURPS1710b_2681</name>
</gene>
<reference key="1">
    <citation type="journal article" date="2010" name="Genome Biol. Evol.">
        <title>Continuing evolution of Burkholderia mallei through genome reduction and large-scale rearrangements.</title>
        <authorList>
            <person name="Losada L."/>
            <person name="Ronning C.M."/>
            <person name="DeShazer D."/>
            <person name="Woods D."/>
            <person name="Fedorova N."/>
            <person name="Kim H.S."/>
            <person name="Shabalina S.A."/>
            <person name="Pearson T.R."/>
            <person name="Brinkac L."/>
            <person name="Tan P."/>
            <person name="Nandi T."/>
            <person name="Crabtree J."/>
            <person name="Badger J."/>
            <person name="Beckstrom-Sternberg S."/>
            <person name="Saqib M."/>
            <person name="Schutzer S.E."/>
            <person name="Keim P."/>
            <person name="Nierman W.C."/>
        </authorList>
    </citation>
    <scope>NUCLEOTIDE SEQUENCE [LARGE SCALE GENOMIC DNA]</scope>
    <source>
        <strain>1710b</strain>
    </source>
</reference>
<evidence type="ECO:0000255" key="1">
    <source>
        <dbReference type="HAMAP-Rule" id="MF_00041"/>
    </source>
</evidence>
<proteinExistence type="inferred from homology"/>
<accession>Q3JQT6</accession>
<comment type="catalytic activity">
    <reaction evidence="1">
        <text>tRNA(Cys) + L-cysteine + ATP = L-cysteinyl-tRNA(Cys) + AMP + diphosphate</text>
        <dbReference type="Rhea" id="RHEA:17773"/>
        <dbReference type="Rhea" id="RHEA-COMP:9661"/>
        <dbReference type="Rhea" id="RHEA-COMP:9679"/>
        <dbReference type="ChEBI" id="CHEBI:30616"/>
        <dbReference type="ChEBI" id="CHEBI:33019"/>
        <dbReference type="ChEBI" id="CHEBI:35235"/>
        <dbReference type="ChEBI" id="CHEBI:78442"/>
        <dbReference type="ChEBI" id="CHEBI:78517"/>
        <dbReference type="ChEBI" id="CHEBI:456215"/>
        <dbReference type="EC" id="6.1.1.16"/>
    </reaction>
</comment>
<comment type="cofactor">
    <cofactor evidence="1">
        <name>Zn(2+)</name>
        <dbReference type="ChEBI" id="CHEBI:29105"/>
    </cofactor>
    <text evidence="1">Binds 1 zinc ion per subunit.</text>
</comment>
<comment type="subunit">
    <text evidence="1">Monomer.</text>
</comment>
<comment type="subcellular location">
    <subcellularLocation>
        <location evidence="1">Cytoplasm</location>
    </subcellularLocation>
</comment>
<comment type="similarity">
    <text evidence="1">Belongs to the class-I aminoacyl-tRNA synthetase family.</text>
</comment>
<feature type="chain" id="PRO_0000240895" description="Cysteine--tRNA ligase">
    <location>
        <begin position="1"/>
        <end position="465"/>
    </location>
</feature>
<feature type="short sequence motif" description="'HIGH' region">
    <location>
        <begin position="32"/>
        <end position="42"/>
    </location>
</feature>
<feature type="short sequence motif" description="'KMSKS' region">
    <location>
        <begin position="271"/>
        <end position="275"/>
    </location>
</feature>
<feature type="binding site" evidence="1">
    <location>
        <position position="30"/>
    </location>
    <ligand>
        <name>Zn(2+)</name>
        <dbReference type="ChEBI" id="CHEBI:29105"/>
    </ligand>
</feature>
<feature type="binding site" evidence="1">
    <location>
        <position position="214"/>
    </location>
    <ligand>
        <name>Zn(2+)</name>
        <dbReference type="ChEBI" id="CHEBI:29105"/>
    </ligand>
</feature>
<feature type="binding site" evidence="1">
    <location>
        <position position="239"/>
    </location>
    <ligand>
        <name>Zn(2+)</name>
        <dbReference type="ChEBI" id="CHEBI:29105"/>
    </ligand>
</feature>
<feature type="binding site" evidence="1">
    <location>
        <position position="243"/>
    </location>
    <ligand>
        <name>Zn(2+)</name>
        <dbReference type="ChEBI" id="CHEBI:29105"/>
    </ligand>
</feature>
<feature type="binding site" evidence="1">
    <location>
        <position position="274"/>
    </location>
    <ligand>
        <name>ATP</name>
        <dbReference type="ChEBI" id="CHEBI:30616"/>
    </ligand>
</feature>
<keyword id="KW-0030">Aminoacyl-tRNA synthetase</keyword>
<keyword id="KW-0067">ATP-binding</keyword>
<keyword id="KW-0963">Cytoplasm</keyword>
<keyword id="KW-0436">Ligase</keyword>
<keyword id="KW-0479">Metal-binding</keyword>
<keyword id="KW-0547">Nucleotide-binding</keyword>
<keyword id="KW-0648">Protein biosynthesis</keyword>
<keyword id="KW-0862">Zinc</keyword>
<organism>
    <name type="scientific">Burkholderia pseudomallei (strain 1710b)</name>
    <dbReference type="NCBI Taxonomy" id="320372"/>
    <lineage>
        <taxon>Bacteria</taxon>
        <taxon>Pseudomonadati</taxon>
        <taxon>Pseudomonadota</taxon>
        <taxon>Betaproteobacteria</taxon>
        <taxon>Burkholderiales</taxon>
        <taxon>Burkholderiaceae</taxon>
        <taxon>Burkholderia</taxon>
        <taxon>pseudomallei group</taxon>
    </lineage>
</organism>
<protein>
    <recommendedName>
        <fullName evidence="1">Cysteine--tRNA ligase</fullName>
        <ecNumber evidence="1">6.1.1.16</ecNumber>
    </recommendedName>
    <alternativeName>
        <fullName evidence="1">Cysteinyl-tRNA synthetase</fullName>
        <shortName evidence="1">CysRS</shortName>
    </alternativeName>
</protein>